<reference key="1">
    <citation type="journal article" date="2008" name="Proc. Natl. Acad. Sci. U.S.A.">
        <title>Niche adaptation and genome expansion in the chlorophyll d-producing cyanobacterium Acaryochloris marina.</title>
        <authorList>
            <person name="Swingley W.D."/>
            <person name="Chen M."/>
            <person name="Cheung P.C."/>
            <person name="Conrad A.L."/>
            <person name="Dejesa L.C."/>
            <person name="Hao J."/>
            <person name="Honchak B.M."/>
            <person name="Karbach L.E."/>
            <person name="Kurdoglu A."/>
            <person name="Lahiri S."/>
            <person name="Mastrian S.D."/>
            <person name="Miyashita H."/>
            <person name="Page L."/>
            <person name="Ramakrishna P."/>
            <person name="Satoh S."/>
            <person name="Sattley W.M."/>
            <person name="Shimada Y."/>
            <person name="Taylor H.L."/>
            <person name="Tomo T."/>
            <person name="Tsuchiya T."/>
            <person name="Wang Z.T."/>
            <person name="Raymond J."/>
            <person name="Mimuro M."/>
            <person name="Blankenship R.E."/>
            <person name="Touchman J.W."/>
        </authorList>
    </citation>
    <scope>NUCLEOTIDE SEQUENCE [LARGE SCALE GENOMIC DNA]</scope>
    <source>
        <strain>MBIC 11017</strain>
    </source>
</reference>
<evidence type="ECO:0000255" key="1">
    <source>
        <dbReference type="HAMAP-Rule" id="MF_00038"/>
    </source>
</evidence>
<dbReference type="EC" id="2.7.8.13" evidence="1"/>
<dbReference type="EMBL" id="CP000828">
    <property type="protein sequence ID" value="ABW30732.1"/>
    <property type="molecule type" value="Genomic_DNA"/>
</dbReference>
<dbReference type="RefSeq" id="WP_012165946.1">
    <property type="nucleotide sequence ID" value="NC_009925.1"/>
</dbReference>
<dbReference type="SMR" id="B0BZI7"/>
<dbReference type="STRING" id="329726.AM1_5787"/>
<dbReference type="KEGG" id="amr:AM1_5787"/>
<dbReference type="eggNOG" id="COG0472">
    <property type="taxonomic scope" value="Bacteria"/>
</dbReference>
<dbReference type="HOGENOM" id="CLU_023982_0_2_3"/>
<dbReference type="OrthoDB" id="9805475at2"/>
<dbReference type="UniPathway" id="UPA00219"/>
<dbReference type="Proteomes" id="UP000000268">
    <property type="component" value="Chromosome"/>
</dbReference>
<dbReference type="GO" id="GO:0005886">
    <property type="term" value="C:plasma membrane"/>
    <property type="evidence" value="ECO:0007669"/>
    <property type="project" value="UniProtKB-SubCell"/>
</dbReference>
<dbReference type="GO" id="GO:0046872">
    <property type="term" value="F:metal ion binding"/>
    <property type="evidence" value="ECO:0007669"/>
    <property type="project" value="UniProtKB-KW"/>
</dbReference>
<dbReference type="GO" id="GO:0008963">
    <property type="term" value="F:phospho-N-acetylmuramoyl-pentapeptide-transferase activity"/>
    <property type="evidence" value="ECO:0007669"/>
    <property type="project" value="UniProtKB-UniRule"/>
</dbReference>
<dbReference type="GO" id="GO:0051992">
    <property type="term" value="F:UDP-N-acetylmuramoyl-L-alanyl-D-glutamyl-meso-2,6-diaminopimelyl-D-alanyl-D-alanine:undecaprenyl-phosphate transferase activity"/>
    <property type="evidence" value="ECO:0007669"/>
    <property type="project" value="RHEA"/>
</dbReference>
<dbReference type="GO" id="GO:0051301">
    <property type="term" value="P:cell division"/>
    <property type="evidence" value="ECO:0007669"/>
    <property type="project" value="UniProtKB-KW"/>
</dbReference>
<dbReference type="GO" id="GO:0071555">
    <property type="term" value="P:cell wall organization"/>
    <property type="evidence" value="ECO:0007669"/>
    <property type="project" value="UniProtKB-KW"/>
</dbReference>
<dbReference type="GO" id="GO:0009252">
    <property type="term" value="P:peptidoglycan biosynthetic process"/>
    <property type="evidence" value="ECO:0007669"/>
    <property type="project" value="UniProtKB-UniRule"/>
</dbReference>
<dbReference type="GO" id="GO:0008360">
    <property type="term" value="P:regulation of cell shape"/>
    <property type="evidence" value="ECO:0007669"/>
    <property type="project" value="UniProtKB-KW"/>
</dbReference>
<dbReference type="CDD" id="cd06852">
    <property type="entry name" value="GT_MraY"/>
    <property type="match status" value="1"/>
</dbReference>
<dbReference type="HAMAP" id="MF_00038">
    <property type="entry name" value="MraY"/>
    <property type="match status" value="1"/>
</dbReference>
<dbReference type="InterPro" id="IPR000715">
    <property type="entry name" value="Glycosyl_transferase_4"/>
</dbReference>
<dbReference type="InterPro" id="IPR003524">
    <property type="entry name" value="PNAcMuramoyl-5peptid_Trfase"/>
</dbReference>
<dbReference type="InterPro" id="IPR018480">
    <property type="entry name" value="PNAcMuramoyl-5peptid_Trfase_CS"/>
</dbReference>
<dbReference type="NCBIfam" id="TIGR00445">
    <property type="entry name" value="mraY"/>
    <property type="match status" value="1"/>
</dbReference>
<dbReference type="PANTHER" id="PTHR22926">
    <property type="entry name" value="PHOSPHO-N-ACETYLMURAMOYL-PENTAPEPTIDE-TRANSFERASE"/>
    <property type="match status" value="1"/>
</dbReference>
<dbReference type="PANTHER" id="PTHR22926:SF5">
    <property type="entry name" value="PHOSPHO-N-ACETYLMURAMOYL-PENTAPEPTIDE-TRANSFERASE HOMOLOG"/>
    <property type="match status" value="1"/>
</dbReference>
<dbReference type="Pfam" id="PF00953">
    <property type="entry name" value="Glycos_transf_4"/>
    <property type="match status" value="1"/>
</dbReference>
<dbReference type="Pfam" id="PF10555">
    <property type="entry name" value="MraY_sig1"/>
    <property type="match status" value="1"/>
</dbReference>
<dbReference type="PROSITE" id="PS01347">
    <property type="entry name" value="MRAY_1"/>
    <property type="match status" value="1"/>
</dbReference>
<dbReference type="PROSITE" id="PS01348">
    <property type="entry name" value="MRAY_2"/>
    <property type="match status" value="1"/>
</dbReference>
<keyword id="KW-0131">Cell cycle</keyword>
<keyword id="KW-0132">Cell division</keyword>
<keyword id="KW-0997">Cell inner membrane</keyword>
<keyword id="KW-1003">Cell membrane</keyword>
<keyword id="KW-0133">Cell shape</keyword>
<keyword id="KW-0961">Cell wall biogenesis/degradation</keyword>
<keyword id="KW-0460">Magnesium</keyword>
<keyword id="KW-0472">Membrane</keyword>
<keyword id="KW-0479">Metal-binding</keyword>
<keyword id="KW-0573">Peptidoglycan synthesis</keyword>
<keyword id="KW-1185">Reference proteome</keyword>
<keyword id="KW-0808">Transferase</keyword>
<keyword id="KW-0812">Transmembrane</keyword>
<keyword id="KW-1133">Transmembrane helix</keyword>
<comment type="function">
    <text evidence="1">Catalyzes the initial step of the lipid cycle reactions in the biosynthesis of the cell wall peptidoglycan: transfers peptidoglycan precursor phospho-MurNAc-pentapeptide from UDP-MurNAc-pentapeptide onto the lipid carrier undecaprenyl phosphate, yielding undecaprenyl-pyrophosphoryl-MurNAc-pentapeptide, known as lipid I.</text>
</comment>
<comment type="catalytic activity">
    <reaction evidence="1">
        <text>UDP-N-acetyl-alpha-D-muramoyl-L-alanyl-gamma-D-glutamyl-meso-2,6-diaminopimeloyl-D-alanyl-D-alanine + di-trans,octa-cis-undecaprenyl phosphate = di-trans,octa-cis-undecaprenyl diphospho-N-acetyl-alpha-D-muramoyl-L-alanyl-D-glutamyl-meso-2,6-diaminopimeloyl-D-alanyl-D-alanine + UMP</text>
        <dbReference type="Rhea" id="RHEA:28386"/>
        <dbReference type="ChEBI" id="CHEBI:57865"/>
        <dbReference type="ChEBI" id="CHEBI:60392"/>
        <dbReference type="ChEBI" id="CHEBI:61386"/>
        <dbReference type="ChEBI" id="CHEBI:61387"/>
        <dbReference type="EC" id="2.7.8.13"/>
    </reaction>
</comment>
<comment type="cofactor">
    <cofactor evidence="1">
        <name>Mg(2+)</name>
        <dbReference type="ChEBI" id="CHEBI:18420"/>
    </cofactor>
</comment>
<comment type="pathway">
    <text evidence="1">Cell wall biogenesis; peptidoglycan biosynthesis.</text>
</comment>
<comment type="subcellular location">
    <subcellularLocation>
        <location evidence="1">Cell inner membrane</location>
        <topology evidence="1">Multi-pass membrane protein</topology>
    </subcellularLocation>
</comment>
<comment type="similarity">
    <text evidence="1">Belongs to the glycosyltransferase 4 family. MraY subfamily.</text>
</comment>
<name>MRAY_ACAM1</name>
<protein>
    <recommendedName>
        <fullName evidence="1">Phospho-N-acetylmuramoyl-pentapeptide-transferase</fullName>
        <ecNumber evidence="1">2.7.8.13</ecNumber>
    </recommendedName>
    <alternativeName>
        <fullName evidence="1">UDP-MurNAc-pentapeptide phosphotransferase</fullName>
    </alternativeName>
</protein>
<sequence length="371" mass="38993">MVLANKTTASTRSGAGRNLYWLLLLCLSGVALATDIYSGRIDTPALTIVAPLWTSTLVVTLLGFWAVPMLRSLKASQVIQEDGPQSHLKKAGTPTMGGIFFMPVALVLGWAWVAANSVNLLEVSAAVLLTLCLGLVGWFDDWQILRKKSNKGISAKLRLGIELGSGLIFGLWLFLTRSDISGLALPFGLSLPIGVLFLAISTFVVAAESNAVNLTDGMDGLAAGTSAIAFLGLALVVAPSWPGLMIFCACFSGSCLGFLAHNHNPAQVFMGDTGSLALGGALAAVGLITNTLWALLILSGLFLVESLSVIAQVTYYKATKGPDGVGKRLFKMSPIHHHFEQSGWPEVRVVSTFYACVAVLAVAACGLNALS</sequence>
<proteinExistence type="inferred from homology"/>
<feature type="chain" id="PRO_0000332522" description="Phospho-N-acetylmuramoyl-pentapeptide-transferase">
    <location>
        <begin position="1"/>
        <end position="371"/>
    </location>
</feature>
<feature type="transmembrane region" description="Helical" evidence="1">
    <location>
        <begin position="19"/>
        <end position="39"/>
    </location>
</feature>
<feature type="transmembrane region" description="Helical" evidence="1">
    <location>
        <begin position="48"/>
        <end position="68"/>
    </location>
</feature>
<feature type="transmembrane region" description="Helical" evidence="1">
    <location>
        <begin position="95"/>
        <end position="115"/>
    </location>
</feature>
<feature type="transmembrane region" description="Helical" evidence="1">
    <location>
        <begin position="119"/>
        <end position="139"/>
    </location>
</feature>
<feature type="transmembrane region" description="Helical" evidence="1">
    <location>
        <begin position="155"/>
        <end position="175"/>
    </location>
</feature>
<feature type="transmembrane region" description="Helical" evidence="1">
    <location>
        <begin position="180"/>
        <end position="200"/>
    </location>
</feature>
<feature type="transmembrane region" description="Helical" evidence="1">
    <location>
        <begin position="227"/>
        <end position="247"/>
    </location>
</feature>
<feature type="transmembrane region" description="Helical" evidence="1">
    <location>
        <begin position="284"/>
        <end position="304"/>
    </location>
</feature>
<feature type="transmembrane region" description="Helical" evidence="1">
    <location>
        <begin position="349"/>
        <end position="369"/>
    </location>
</feature>
<accession>B0BZI7</accession>
<gene>
    <name evidence="1" type="primary">mraY</name>
    <name type="ordered locus">AM1_5787</name>
</gene>
<organism>
    <name type="scientific">Acaryochloris marina (strain MBIC 11017)</name>
    <dbReference type="NCBI Taxonomy" id="329726"/>
    <lineage>
        <taxon>Bacteria</taxon>
        <taxon>Bacillati</taxon>
        <taxon>Cyanobacteriota</taxon>
        <taxon>Cyanophyceae</taxon>
        <taxon>Acaryochloridales</taxon>
        <taxon>Acaryochloridaceae</taxon>
        <taxon>Acaryochloris</taxon>
    </lineage>
</organism>